<comment type="function">
    <text evidence="1">Catalyzes the hydrolysis of N-formyl-L-kynurenine to L-kynurenine, the second step in the kynurenine pathway of tryptophan degradation.</text>
</comment>
<comment type="catalytic activity">
    <reaction evidence="1">
        <text>N-formyl-L-kynurenine + H2O = L-kynurenine + formate + H(+)</text>
        <dbReference type="Rhea" id="RHEA:13009"/>
        <dbReference type="ChEBI" id="CHEBI:15377"/>
        <dbReference type="ChEBI" id="CHEBI:15378"/>
        <dbReference type="ChEBI" id="CHEBI:15740"/>
        <dbReference type="ChEBI" id="CHEBI:57959"/>
        <dbReference type="ChEBI" id="CHEBI:58629"/>
        <dbReference type="EC" id="3.5.1.9"/>
    </reaction>
</comment>
<comment type="cofactor">
    <cofactor evidence="1">
        <name>Zn(2+)</name>
        <dbReference type="ChEBI" id="CHEBI:29105"/>
    </cofactor>
    <text evidence="1">Binds 2 zinc ions per subunit.</text>
</comment>
<comment type="pathway">
    <text evidence="1">Amino-acid degradation; L-tryptophan degradation via kynurenine pathway; L-kynurenine from L-tryptophan: step 2/2.</text>
</comment>
<comment type="subunit">
    <text evidence="1">Homodimer.</text>
</comment>
<comment type="similarity">
    <text evidence="1">Belongs to the Cyclase 1 superfamily. KynB family.</text>
</comment>
<feature type="chain" id="PRO_0000362133" description="Kynurenine formamidase">
    <location>
        <begin position="1"/>
        <end position="216"/>
    </location>
</feature>
<feature type="active site" description="Proton donor/acceptor" evidence="1">
    <location>
        <position position="65"/>
    </location>
</feature>
<feature type="binding site" evidence="1">
    <location>
        <position position="25"/>
    </location>
    <ligand>
        <name>substrate</name>
    </ligand>
</feature>
<feature type="binding site" evidence="1">
    <location>
        <position position="55"/>
    </location>
    <ligand>
        <name>Zn(2+)</name>
        <dbReference type="ChEBI" id="CHEBI:29105"/>
        <label>1</label>
    </ligand>
</feature>
<feature type="binding site" evidence="1">
    <location>
        <position position="59"/>
    </location>
    <ligand>
        <name>Zn(2+)</name>
        <dbReference type="ChEBI" id="CHEBI:29105"/>
        <label>1</label>
    </ligand>
</feature>
<feature type="binding site" evidence="1">
    <location>
        <position position="61"/>
    </location>
    <ligand>
        <name>Zn(2+)</name>
        <dbReference type="ChEBI" id="CHEBI:29105"/>
        <label>1</label>
    </ligand>
</feature>
<feature type="binding site" evidence="1">
    <location>
        <position position="61"/>
    </location>
    <ligand>
        <name>Zn(2+)</name>
        <dbReference type="ChEBI" id="CHEBI:29105"/>
        <label>2</label>
    </ligand>
</feature>
<feature type="binding site" evidence="1">
    <location>
        <position position="167"/>
    </location>
    <ligand>
        <name>Zn(2+)</name>
        <dbReference type="ChEBI" id="CHEBI:29105"/>
        <label>2</label>
    </ligand>
</feature>
<feature type="binding site" evidence="1">
    <location>
        <position position="179"/>
    </location>
    <ligand>
        <name>Zn(2+)</name>
        <dbReference type="ChEBI" id="CHEBI:29105"/>
        <label>1</label>
    </ligand>
</feature>
<feature type="binding site" evidence="1">
    <location>
        <position position="179"/>
    </location>
    <ligand>
        <name>Zn(2+)</name>
        <dbReference type="ChEBI" id="CHEBI:29105"/>
        <label>2</label>
    </ligand>
</feature>
<sequence>MTAPNQDPRRLWDISPPLSPATPVWPGDTPFQQQPAWQMDEHCPVNVGRITLSPHTGAHADAPLHYAADGAPIGAVPLTPYLGTCRVIHCIGASPVVEPRHIEHALAGLPPRVLLRTYRQAPLAQWDPHFCAVAAETIALLAAHGVQLVGIDTPSLDPQESKTMDAHNAVRRHGLAILEGIVLDEVDAGDYELIALPLRFAGLDASPVRAVLRSLD</sequence>
<protein>
    <recommendedName>
        <fullName evidence="1">Kynurenine formamidase</fullName>
        <shortName evidence="1">KFA</shortName>
        <shortName evidence="1">KFase</shortName>
        <ecNumber evidence="1">3.5.1.9</ecNumber>
    </recommendedName>
    <alternativeName>
        <fullName evidence="1">Arylformamidase</fullName>
    </alternativeName>
    <alternativeName>
        <fullName evidence="1">N-formylkynurenine formamidase</fullName>
        <shortName evidence="1">FKF</shortName>
    </alternativeName>
</protein>
<gene>
    <name evidence="1" type="primary">kynB</name>
    <name type="ordered locus">H16_A2814</name>
</gene>
<evidence type="ECO:0000255" key="1">
    <source>
        <dbReference type="HAMAP-Rule" id="MF_01969"/>
    </source>
</evidence>
<keyword id="KW-0378">Hydrolase</keyword>
<keyword id="KW-0479">Metal-binding</keyword>
<keyword id="KW-1185">Reference proteome</keyword>
<keyword id="KW-0823">Tryptophan catabolism</keyword>
<keyword id="KW-0862">Zinc</keyword>
<accession>Q0K7X9</accession>
<dbReference type="EC" id="3.5.1.9" evidence="1"/>
<dbReference type="EMBL" id="AM260479">
    <property type="protein sequence ID" value="CAJ93892.1"/>
    <property type="molecule type" value="Genomic_DNA"/>
</dbReference>
<dbReference type="RefSeq" id="WP_010813723.1">
    <property type="nucleotide sequence ID" value="NZ_CP039287.1"/>
</dbReference>
<dbReference type="SMR" id="Q0K7X9"/>
<dbReference type="STRING" id="381666.H16_A2814"/>
<dbReference type="KEGG" id="reh:H16_A2814"/>
<dbReference type="eggNOG" id="COG1878">
    <property type="taxonomic scope" value="Bacteria"/>
</dbReference>
<dbReference type="HOGENOM" id="CLU_030671_3_1_4"/>
<dbReference type="OrthoDB" id="9796085at2"/>
<dbReference type="UniPathway" id="UPA00333">
    <property type="reaction ID" value="UER00454"/>
</dbReference>
<dbReference type="Proteomes" id="UP000008210">
    <property type="component" value="Chromosome 1"/>
</dbReference>
<dbReference type="GO" id="GO:0004061">
    <property type="term" value="F:arylformamidase activity"/>
    <property type="evidence" value="ECO:0000250"/>
    <property type="project" value="UniProtKB"/>
</dbReference>
<dbReference type="GO" id="GO:0004328">
    <property type="term" value="F:formamidase activity"/>
    <property type="evidence" value="ECO:0007669"/>
    <property type="project" value="InterPro"/>
</dbReference>
<dbReference type="GO" id="GO:0008270">
    <property type="term" value="F:zinc ion binding"/>
    <property type="evidence" value="ECO:0007669"/>
    <property type="project" value="UniProtKB-UniRule"/>
</dbReference>
<dbReference type="GO" id="GO:0043420">
    <property type="term" value="P:anthranilate metabolic process"/>
    <property type="evidence" value="ECO:0000250"/>
    <property type="project" value="UniProtKB"/>
</dbReference>
<dbReference type="GO" id="GO:0019441">
    <property type="term" value="P:L-tryptophan catabolic process to kynurenine"/>
    <property type="evidence" value="ECO:0000250"/>
    <property type="project" value="UniProtKB"/>
</dbReference>
<dbReference type="FunFam" id="3.50.30.50:FF:000001">
    <property type="entry name" value="Kynurenine formamidase"/>
    <property type="match status" value="1"/>
</dbReference>
<dbReference type="Gene3D" id="3.50.30.50">
    <property type="entry name" value="Putative cyclase"/>
    <property type="match status" value="1"/>
</dbReference>
<dbReference type="HAMAP" id="MF_01969">
    <property type="entry name" value="KynB"/>
    <property type="match status" value="1"/>
</dbReference>
<dbReference type="InterPro" id="IPR007325">
    <property type="entry name" value="KFase/CYL"/>
</dbReference>
<dbReference type="InterPro" id="IPR037175">
    <property type="entry name" value="KFase_sf"/>
</dbReference>
<dbReference type="InterPro" id="IPR017484">
    <property type="entry name" value="Kynurenine_formamidase_bac"/>
</dbReference>
<dbReference type="NCBIfam" id="TIGR03035">
    <property type="entry name" value="trp_arylform"/>
    <property type="match status" value="1"/>
</dbReference>
<dbReference type="PANTHER" id="PTHR31118">
    <property type="entry name" value="CYCLASE-LIKE PROTEIN 2"/>
    <property type="match status" value="1"/>
</dbReference>
<dbReference type="PANTHER" id="PTHR31118:SF32">
    <property type="entry name" value="KYNURENINE FORMAMIDASE"/>
    <property type="match status" value="1"/>
</dbReference>
<dbReference type="Pfam" id="PF04199">
    <property type="entry name" value="Cyclase"/>
    <property type="match status" value="1"/>
</dbReference>
<dbReference type="SUPFAM" id="SSF102198">
    <property type="entry name" value="Putative cyclase"/>
    <property type="match status" value="1"/>
</dbReference>
<name>KYNB_CUPNH</name>
<proteinExistence type="inferred from homology"/>
<reference key="1">
    <citation type="journal article" date="2006" name="Nat. Biotechnol.">
        <title>Genome sequence of the bioplastic-producing 'Knallgas' bacterium Ralstonia eutropha H16.</title>
        <authorList>
            <person name="Pohlmann A."/>
            <person name="Fricke W.F."/>
            <person name="Reinecke F."/>
            <person name="Kusian B."/>
            <person name="Liesegang H."/>
            <person name="Cramm R."/>
            <person name="Eitinger T."/>
            <person name="Ewering C."/>
            <person name="Poetter M."/>
            <person name="Schwartz E."/>
            <person name="Strittmatter A."/>
            <person name="Voss I."/>
            <person name="Gottschalk G."/>
            <person name="Steinbuechel A."/>
            <person name="Friedrich B."/>
            <person name="Bowien B."/>
        </authorList>
    </citation>
    <scope>NUCLEOTIDE SEQUENCE [LARGE SCALE GENOMIC DNA]</scope>
    <source>
        <strain>ATCC 17699 / DSM 428 / KCTC 22496 / NCIMB 10442 / H16 / Stanier 337</strain>
    </source>
</reference>
<organism>
    <name type="scientific">Cupriavidus necator (strain ATCC 17699 / DSM 428 / KCTC 22496 / NCIMB 10442 / H16 / Stanier 337)</name>
    <name type="common">Ralstonia eutropha</name>
    <dbReference type="NCBI Taxonomy" id="381666"/>
    <lineage>
        <taxon>Bacteria</taxon>
        <taxon>Pseudomonadati</taxon>
        <taxon>Pseudomonadota</taxon>
        <taxon>Betaproteobacteria</taxon>
        <taxon>Burkholderiales</taxon>
        <taxon>Burkholderiaceae</taxon>
        <taxon>Cupriavidus</taxon>
    </lineage>
</organism>